<sequence>MTNIRKTHPLIKIVNHSFIDLPAPSNISAWWNFGSLLGLCLAIQILTGLFLAMHYTSDTMTAFSSVTHICRDVNYGWLIRYMHANGASMFFICLFLHVGRGLYYGSYIYFETWNIGVILLFVVMATAFMGYVLPWGQMSFWGATVITNLLSAIPYIGAXXVEWIWGGFSVDKATLTRFFAFHFILPFIIAALTMVHLLFLHETGSNNPLGLVSDSDKVPFHPYYTIKDILGVLLLILALMTLILFSPDLLGDPDNYTPANPLSTPPHIKPEWYFLFAYAILRSIPNKLGGVLALAFSILILMLFPLLHLSKQRSMMFRPLSQCVFWILVADLFTLTWIGGQPVEYPFIVIGQLASILYFTIILLILPTASLIENKLLKW</sequence>
<accession>Q9TF55</accession>
<organism>
    <name type="scientific">Urocitellus parryii</name>
    <name type="common">Arctic ground squirrel</name>
    <name type="synonym">Spermophilus parryii</name>
    <dbReference type="NCBI Taxonomy" id="9999"/>
    <lineage>
        <taxon>Eukaryota</taxon>
        <taxon>Metazoa</taxon>
        <taxon>Chordata</taxon>
        <taxon>Craniata</taxon>
        <taxon>Vertebrata</taxon>
        <taxon>Euteleostomi</taxon>
        <taxon>Mammalia</taxon>
        <taxon>Eutheria</taxon>
        <taxon>Euarchontoglires</taxon>
        <taxon>Glires</taxon>
        <taxon>Rodentia</taxon>
        <taxon>Sciuromorpha</taxon>
        <taxon>Sciuridae</taxon>
        <taxon>Xerinae</taxon>
        <taxon>Marmotini</taxon>
        <taxon>Urocitellus</taxon>
    </lineage>
</organism>
<gene>
    <name type="primary">MT-CYB</name>
    <name type="synonym">COB</name>
    <name type="synonym">CYTB</name>
    <name type="synonym">MTCYB</name>
</gene>
<keyword id="KW-0249">Electron transport</keyword>
<keyword id="KW-0349">Heme</keyword>
<keyword id="KW-0408">Iron</keyword>
<keyword id="KW-0472">Membrane</keyword>
<keyword id="KW-0479">Metal-binding</keyword>
<keyword id="KW-0496">Mitochondrion</keyword>
<keyword id="KW-0999">Mitochondrion inner membrane</keyword>
<keyword id="KW-1185">Reference proteome</keyword>
<keyword id="KW-0679">Respiratory chain</keyword>
<keyword id="KW-0812">Transmembrane</keyword>
<keyword id="KW-1133">Transmembrane helix</keyword>
<keyword id="KW-0813">Transport</keyword>
<keyword id="KW-0830">Ubiquinone</keyword>
<comment type="function">
    <text evidence="2">Component of the ubiquinol-cytochrome c reductase complex (complex III or cytochrome b-c1 complex) that is part of the mitochondrial respiratory chain. The b-c1 complex mediates electron transfer from ubiquinol to cytochrome c. Contributes to the generation of a proton gradient across the mitochondrial membrane that is then used for ATP synthesis.</text>
</comment>
<comment type="cofactor">
    <cofactor evidence="2">
        <name>heme b</name>
        <dbReference type="ChEBI" id="CHEBI:60344"/>
    </cofactor>
    <text evidence="2">Binds 2 heme b groups non-covalently.</text>
</comment>
<comment type="subunit">
    <text evidence="2">The cytochrome bc1 complex contains 11 subunits: 3 respiratory subunits (MT-CYB, CYC1 and UQCRFS1), 2 core proteins (UQCRC1 and UQCRC2) and 6 low-molecular weight proteins (UQCRH/QCR6, UQCRB/QCR7, UQCRQ/QCR8, UQCR10/QCR9, UQCR11/QCR10 and a cleavage product of UQCRFS1). This cytochrome bc1 complex then forms a dimer.</text>
</comment>
<comment type="subcellular location">
    <subcellularLocation>
        <location evidence="2">Mitochondrion inner membrane</location>
        <topology evidence="2">Multi-pass membrane protein</topology>
    </subcellularLocation>
</comment>
<comment type="miscellaneous">
    <text evidence="1">Heme 1 (or BL or b562) is low-potential and absorbs at about 562 nm, and heme 2 (or BH or b566) is high-potential and absorbs at about 566 nm.</text>
</comment>
<comment type="similarity">
    <text evidence="3 4">Belongs to the cytochrome b family.</text>
</comment>
<comment type="caution">
    <text evidence="2">The full-length protein contains only eight transmembrane helices, not nine as predicted by bioinformatics tools.</text>
</comment>
<feature type="chain" id="PRO_0000061599" description="Cytochrome b">
    <location>
        <begin position="1"/>
        <end position="379"/>
    </location>
</feature>
<feature type="transmembrane region" description="Helical" evidence="2">
    <location>
        <begin position="33"/>
        <end position="53"/>
    </location>
</feature>
<feature type="transmembrane region" description="Helical" evidence="2">
    <location>
        <begin position="77"/>
        <end position="98"/>
    </location>
</feature>
<feature type="transmembrane region" description="Helical" evidence="2">
    <location>
        <begin position="113"/>
        <end position="133"/>
    </location>
</feature>
<feature type="transmembrane region" description="Helical" evidence="2">
    <location>
        <begin position="178"/>
        <end position="198"/>
    </location>
</feature>
<feature type="transmembrane region" description="Helical" evidence="2">
    <location>
        <begin position="226"/>
        <end position="246"/>
    </location>
</feature>
<feature type="transmembrane region" description="Helical" evidence="2">
    <location>
        <begin position="288"/>
        <end position="308"/>
    </location>
</feature>
<feature type="transmembrane region" description="Helical" evidence="2">
    <location>
        <begin position="320"/>
        <end position="340"/>
    </location>
</feature>
<feature type="transmembrane region" description="Helical" evidence="2">
    <location>
        <begin position="347"/>
        <end position="367"/>
    </location>
</feature>
<feature type="binding site" description="axial binding residue" evidence="2">
    <location>
        <position position="83"/>
    </location>
    <ligand>
        <name>heme b</name>
        <dbReference type="ChEBI" id="CHEBI:60344"/>
        <label>b562</label>
    </ligand>
    <ligandPart>
        <name>Fe</name>
        <dbReference type="ChEBI" id="CHEBI:18248"/>
    </ligandPart>
</feature>
<feature type="binding site" description="axial binding residue" evidence="2">
    <location>
        <position position="97"/>
    </location>
    <ligand>
        <name>heme b</name>
        <dbReference type="ChEBI" id="CHEBI:60344"/>
        <label>b566</label>
    </ligand>
    <ligandPart>
        <name>Fe</name>
        <dbReference type="ChEBI" id="CHEBI:18248"/>
    </ligandPart>
</feature>
<feature type="binding site" description="axial binding residue" evidence="2">
    <location>
        <position position="182"/>
    </location>
    <ligand>
        <name>heme b</name>
        <dbReference type="ChEBI" id="CHEBI:60344"/>
        <label>b562</label>
    </ligand>
    <ligandPart>
        <name>Fe</name>
        <dbReference type="ChEBI" id="CHEBI:18248"/>
    </ligandPart>
</feature>
<feature type="binding site" description="axial binding residue" evidence="2">
    <location>
        <position position="196"/>
    </location>
    <ligand>
        <name>heme b</name>
        <dbReference type="ChEBI" id="CHEBI:60344"/>
        <label>b566</label>
    </ligand>
    <ligandPart>
        <name>Fe</name>
        <dbReference type="ChEBI" id="CHEBI:18248"/>
    </ligandPart>
</feature>
<feature type="binding site" evidence="2">
    <location>
        <position position="201"/>
    </location>
    <ligand>
        <name>a ubiquinone</name>
        <dbReference type="ChEBI" id="CHEBI:16389"/>
    </ligand>
</feature>
<dbReference type="EMBL" id="AF157896">
    <property type="protein sequence ID" value="AAD50180.1"/>
    <property type="molecule type" value="Genomic_DNA"/>
</dbReference>
<dbReference type="Proteomes" id="UP000694417">
    <property type="component" value="Unplaced"/>
</dbReference>
<dbReference type="GO" id="GO:0005743">
    <property type="term" value="C:mitochondrial inner membrane"/>
    <property type="evidence" value="ECO:0007669"/>
    <property type="project" value="UniProtKB-SubCell"/>
</dbReference>
<dbReference type="GO" id="GO:0045275">
    <property type="term" value="C:respiratory chain complex III"/>
    <property type="evidence" value="ECO:0007669"/>
    <property type="project" value="InterPro"/>
</dbReference>
<dbReference type="GO" id="GO:0046872">
    <property type="term" value="F:metal ion binding"/>
    <property type="evidence" value="ECO:0007669"/>
    <property type="project" value="UniProtKB-KW"/>
</dbReference>
<dbReference type="GO" id="GO:0008121">
    <property type="term" value="F:ubiquinol-cytochrome-c reductase activity"/>
    <property type="evidence" value="ECO:0007669"/>
    <property type="project" value="InterPro"/>
</dbReference>
<dbReference type="GO" id="GO:0006122">
    <property type="term" value="P:mitochondrial electron transport, ubiquinol to cytochrome c"/>
    <property type="evidence" value="ECO:0007669"/>
    <property type="project" value="TreeGrafter"/>
</dbReference>
<dbReference type="CDD" id="cd00290">
    <property type="entry name" value="cytochrome_b_C"/>
    <property type="match status" value="1"/>
</dbReference>
<dbReference type="CDD" id="cd00284">
    <property type="entry name" value="Cytochrome_b_N"/>
    <property type="match status" value="1"/>
</dbReference>
<dbReference type="FunFam" id="1.20.810.10:FF:000002">
    <property type="entry name" value="Cytochrome b"/>
    <property type="match status" value="1"/>
</dbReference>
<dbReference type="Gene3D" id="1.20.810.10">
    <property type="entry name" value="Cytochrome Bc1 Complex, Chain C"/>
    <property type="match status" value="1"/>
</dbReference>
<dbReference type="InterPro" id="IPR005798">
    <property type="entry name" value="Cyt_b/b6_C"/>
</dbReference>
<dbReference type="InterPro" id="IPR036150">
    <property type="entry name" value="Cyt_b/b6_C_sf"/>
</dbReference>
<dbReference type="InterPro" id="IPR005797">
    <property type="entry name" value="Cyt_b/b6_N"/>
</dbReference>
<dbReference type="InterPro" id="IPR027387">
    <property type="entry name" value="Cytb/b6-like_sf"/>
</dbReference>
<dbReference type="InterPro" id="IPR030689">
    <property type="entry name" value="Cytochrome_b"/>
</dbReference>
<dbReference type="InterPro" id="IPR048260">
    <property type="entry name" value="Cytochrome_b_C_euk/bac"/>
</dbReference>
<dbReference type="InterPro" id="IPR048259">
    <property type="entry name" value="Cytochrome_b_N_euk/bac"/>
</dbReference>
<dbReference type="InterPro" id="IPR016174">
    <property type="entry name" value="Di-haem_cyt_TM"/>
</dbReference>
<dbReference type="PANTHER" id="PTHR19271">
    <property type="entry name" value="CYTOCHROME B"/>
    <property type="match status" value="1"/>
</dbReference>
<dbReference type="PANTHER" id="PTHR19271:SF16">
    <property type="entry name" value="CYTOCHROME B"/>
    <property type="match status" value="1"/>
</dbReference>
<dbReference type="Pfam" id="PF00032">
    <property type="entry name" value="Cytochrom_B_C"/>
    <property type="match status" value="1"/>
</dbReference>
<dbReference type="Pfam" id="PF00033">
    <property type="entry name" value="Cytochrome_B"/>
    <property type="match status" value="1"/>
</dbReference>
<dbReference type="PIRSF" id="PIRSF038885">
    <property type="entry name" value="COB"/>
    <property type="match status" value="1"/>
</dbReference>
<dbReference type="SUPFAM" id="SSF81648">
    <property type="entry name" value="a domain/subunit of cytochrome bc1 complex (Ubiquinol-cytochrome c reductase)"/>
    <property type="match status" value="1"/>
</dbReference>
<dbReference type="SUPFAM" id="SSF81342">
    <property type="entry name" value="Transmembrane di-heme cytochromes"/>
    <property type="match status" value="1"/>
</dbReference>
<dbReference type="PROSITE" id="PS51003">
    <property type="entry name" value="CYTB_CTER"/>
    <property type="match status" value="1"/>
</dbReference>
<dbReference type="PROSITE" id="PS51002">
    <property type="entry name" value="CYTB_NTER"/>
    <property type="match status" value="1"/>
</dbReference>
<geneLocation type="mitochondrion"/>
<reference key="1">
    <citation type="submission" date="1999-06" db="EMBL/GenBank/DDBJ databases">
        <title>A molecular phylogeny of ground squirrels and prairie dogs.</title>
        <authorList>
            <person name="Harrison R.G."/>
            <person name="Sherman P.W."/>
            <person name="Yensen E."/>
            <person name="Hoffmann R.S."/>
            <person name="Bogdanowicz S.M."/>
        </authorList>
    </citation>
    <scope>NUCLEOTIDE SEQUENCE [GENOMIC DNA]</scope>
    <source>
        <strain>Isolate S45</strain>
    </source>
</reference>
<evidence type="ECO:0000250" key="1"/>
<evidence type="ECO:0000250" key="2">
    <source>
        <dbReference type="UniProtKB" id="P00157"/>
    </source>
</evidence>
<evidence type="ECO:0000255" key="3">
    <source>
        <dbReference type="PROSITE-ProRule" id="PRU00967"/>
    </source>
</evidence>
<evidence type="ECO:0000255" key="4">
    <source>
        <dbReference type="PROSITE-ProRule" id="PRU00968"/>
    </source>
</evidence>
<name>CYB_UROPR</name>
<proteinExistence type="inferred from homology"/>
<protein>
    <recommendedName>
        <fullName>Cytochrome b</fullName>
    </recommendedName>
    <alternativeName>
        <fullName>Complex III subunit 3</fullName>
    </alternativeName>
    <alternativeName>
        <fullName>Complex III subunit III</fullName>
    </alternativeName>
    <alternativeName>
        <fullName>Cytochrome b-c1 complex subunit 3</fullName>
    </alternativeName>
    <alternativeName>
        <fullName>Ubiquinol-cytochrome-c reductase complex cytochrome b subunit</fullName>
    </alternativeName>
</protein>